<accession>A2C7N3</accession>
<sequence length="439" mass="48028">MSLANVVVIGAQWGDEGKGKITDLLSRSADVVVRYQGGVNAGHTIVVDDKVLKLHLIPSGILYPETICLIGSGTVIDPKVMLKELDMLLENSIDISGLQLASTAHVTMPYHRLLDEAMEQQRGDQRIGTTGRGIGPTYADKSQRNGIRVLDLLDSQRLRERLRGPLQEKNRLLEQIYGVAPLDSEQVIEEYLGYGQRLAPHVVDCIQTIHQAARSRKNILFEGAQGTLLDLDHGTYPYVTSSNPISGGACIGAGVGPTLIDRVIGVAKAYTTRVGEGPFPTELEGSINEQLCDRGGEFGTTTGRRRRCGWFDGVIGRYAVAVNGLDCLAITKLDVLDELDEIRVCVAYELNGERIEHFPSSAEDFARCHPIFETLPGWQCTTADCRRLEDLPTTAMDYLRFLADLMEVPIAIVSLGANRDQTIVVEDPIHGPKRALLSA</sequence>
<gene>
    <name evidence="1" type="primary">purA</name>
    <name type="ordered locus">P9303_07421</name>
</gene>
<reference key="1">
    <citation type="journal article" date="2007" name="PLoS Genet.">
        <title>Patterns and implications of gene gain and loss in the evolution of Prochlorococcus.</title>
        <authorList>
            <person name="Kettler G.C."/>
            <person name="Martiny A.C."/>
            <person name="Huang K."/>
            <person name="Zucker J."/>
            <person name="Coleman M.L."/>
            <person name="Rodrigue S."/>
            <person name="Chen F."/>
            <person name="Lapidus A."/>
            <person name="Ferriera S."/>
            <person name="Johnson J."/>
            <person name="Steglich C."/>
            <person name="Church G.M."/>
            <person name="Richardson P."/>
            <person name="Chisholm S.W."/>
        </authorList>
    </citation>
    <scope>NUCLEOTIDE SEQUENCE [LARGE SCALE GENOMIC DNA]</scope>
    <source>
        <strain>MIT 9303</strain>
    </source>
</reference>
<comment type="function">
    <text evidence="1">Plays an important role in the de novo pathway of purine nucleotide biosynthesis. Catalyzes the first committed step in the biosynthesis of AMP from IMP.</text>
</comment>
<comment type="catalytic activity">
    <reaction evidence="1">
        <text>IMP + L-aspartate + GTP = N(6)-(1,2-dicarboxyethyl)-AMP + GDP + phosphate + 2 H(+)</text>
        <dbReference type="Rhea" id="RHEA:15753"/>
        <dbReference type="ChEBI" id="CHEBI:15378"/>
        <dbReference type="ChEBI" id="CHEBI:29991"/>
        <dbReference type="ChEBI" id="CHEBI:37565"/>
        <dbReference type="ChEBI" id="CHEBI:43474"/>
        <dbReference type="ChEBI" id="CHEBI:57567"/>
        <dbReference type="ChEBI" id="CHEBI:58053"/>
        <dbReference type="ChEBI" id="CHEBI:58189"/>
        <dbReference type="EC" id="6.3.4.4"/>
    </reaction>
</comment>
<comment type="cofactor">
    <cofactor evidence="1">
        <name>Mg(2+)</name>
        <dbReference type="ChEBI" id="CHEBI:18420"/>
    </cofactor>
    <text evidence="1">Binds 1 Mg(2+) ion per subunit.</text>
</comment>
<comment type="pathway">
    <text evidence="1">Purine metabolism; AMP biosynthesis via de novo pathway; AMP from IMP: step 1/2.</text>
</comment>
<comment type="subunit">
    <text evidence="1">Homodimer.</text>
</comment>
<comment type="subcellular location">
    <subcellularLocation>
        <location evidence="1">Cytoplasm</location>
    </subcellularLocation>
</comment>
<comment type="similarity">
    <text evidence="1">Belongs to the adenylosuccinate synthetase family.</text>
</comment>
<feature type="chain" id="PRO_0000321806" description="Adenylosuccinate synthetase">
    <location>
        <begin position="1"/>
        <end position="439"/>
    </location>
</feature>
<feature type="active site" description="Proton acceptor" evidence="1">
    <location>
        <position position="15"/>
    </location>
</feature>
<feature type="active site" description="Proton donor" evidence="1">
    <location>
        <position position="43"/>
    </location>
</feature>
<feature type="binding site" evidence="1">
    <location>
        <begin position="14"/>
        <end position="20"/>
    </location>
    <ligand>
        <name>GTP</name>
        <dbReference type="ChEBI" id="CHEBI:37565"/>
    </ligand>
</feature>
<feature type="binding site" description="in other chain" evidence="1">
    <location>
        <begin position="15"/>
        <end position="18"/>
    </location>
    <ligand>
        <name>IMP</name>
        <dbReference type="ChEBI" id="CHEBI:58053"/>
        <note>ligand shared between dimeric partners</note>
    </ligand>
</feature>
<feature type="binding site" evidence="1">
    <location>
        <position position="15"/>
    </location>
    <ligand>
        <name>Mg(2+)</name>
        <dbReference type="ChEBI" id="CHEBI:18420"/>
    </ligand>
</feature>
<feature type="binding site" description="in other chain" evidence="1">
    <location>
        <begin position="40"/>
        <end position="43"/>
    </location>
    <ligand>
        <name>IMP</name>
        <dbReference type="ChEBI" id="CHEBI:58053"/>
        <note>ligand shared between dimeric partners</note>
    </ligand>
</feature>
<feature type="binding site" evidence="1">
    <location>
        <begin position="42"/>
        <end position="44"/>
    </location>
    <ligand>
        <name>GTP</name>
        <dbReference type="ChEBI" id="CHEBI:37565"/>
    </ligand>
</feature>
<feature type="binding site" evidence="1">
    <location>
        <position position="42"/>
    </location>
    <ligand>
        <name>Mg(2+)</name>
        <dbReference type="ChEBI" id="CHEBI:18420"/>
    </ligand>
</feature>
<feature type="binding site" description="in other chain" evidence="1">
    <location>
        <position position="130"/>
    </location>
    <ligand>
        <name>IMP</name>
        <dbReference type="ChEBI" id="CHEBI:58053"/>
        <note>ligand shared between dimeric partners</note>
    </ligand>
</feature>
<feature type="binding site" evidence="1">
    <location>
        <position position="144"/>
    </location>
    <ligand>
        <name>IMP</name>
        <dbReference type="ChEBI" id="CHEBI:58053"/>
        <note>ligand shared between dimeric partners</note>
    </ligand>
</feature>
<feature type="binding site" description="in other chain" evidence="1">
    <location>
        <position position="225"/>
    </location>
    <ligand>
        <name>IMP</name>
        <dbReference type="ChEBI" id="CHEBI:58053"/>
        <note>ligand shared between dimeric partners</note>
    </ligand>
</feature>
<feature type="binding site" description="in other chain" evidence="1">
    <location>
        <position position="240"/>
    </location>
    <ligand>
        <name>IMP</name>
        <dbReference type="ChEBI" id="CHEBI:58053"/>
        <note>ligand shared between dimeric partners</note>
    </ligand>
</feature>
<feature type="binding site" evidence="1">
    <location>
        <begin position="300"/>
        <end position="306"/>
    </location>
    <ligand>
        <name>substrate</name>
    </ligand>
</feature>
<feature type="binding site" description="in other chain" evidence="1">
    <location>
        <position position="304"/>
    </location>
    <ligand>
        <name>IMP</name>
        <dbReference type="ChEBI" id="CHEBI:58053"/>
        <note>ligand shared between dimeric partners</note>
    </ligand>
</feature>
<feature type="binding site" evidence="1">
    <location>
        <position position="306"/>
    </location>
    <ligand>
        <name>GTP</name>
        <dbReference type="ChEBI" id="CHEBI:37565"/>
    </ligand>
</feature>
<feature type="binding site" evidence="1">
    <location>
        <begin position="332"/>
        <end position="334"/>
    </location>
    <ligand>
        <name>GTP</name>
        <dbReference type="ChEBI" id="CHEBI:37565"/>
    </ligand>
</feature>
<feature type="binding site" evidence="1">
    <location>
        <begin position="414"/>
        <end position="416"/>
    </location>
    <ligand>
        <name>GTP</name>
        <dbReference type="ChEBI" id="CHEBI:37565"/>
    </ligand>
</feature>
<protein>
    <recommendedName>
        <fullName evidence="1">Adenylosuccinate synthetase</fullName>
        <shortName evidence="1">AMPSase</shortName>
        <shortName evidence="1">AdSS</shortName>
        <ecNumber evidence="1">6.3.4.4</ecNumber>
    </recommendedName>
    <alternativeName>
        <fullName evidence="1">IMP--aspartate ligase</fullName>
    </alternativeName>
</protein>
<keyword id="KW-0963">Cytoplasm</keyword>
<keyword id="KW-0342">GTP-binding</keyword>
<keyword id="KW-0436">Ligase</keyword>
<keyword id="KW-0460">Magnesium</keyword>
<keyword id="KW-0479">Metal-binding</keyword>
<keyword id="KW-0547">Nucleotide-binding</keyword>
<keyword id="KW-0658">Purine biosynthesis</keyword>
<dbReference type="EC" id="6.3.4.4" evidence="1"/>
<dbReference type="EMBL" id="CP000554">
    <property type="protein sequence ID" value="ABM77493.1"/>
    <property type="molecule type" value="Genomic_DNA"/>
</dbReference>
<dbReference type="RefSeq" id="WP_011825407.1">
    <property type="nucleotide sequence ID" value="NC_008820.1"/>
</dbReference>
<dbReference type="SMR" id="A2C7N3"/>
<dbReference type="STRING" id="59922.P9303_07421"/>
<dbReference type="KEGG" id="pmf:P9303_07421"/>
<dbReference type="HOGENOM" id="CLU_029848_0_0_3"/>
<dbReference type="UniPathway" id="UPA00075">
    <property type="reaction ID" value="UER00335"/>
</dbReference>
<dbReference type="Proteomes" id="UP000002274">
    <property type="component" value="Chromosome"/>
</dbReference>
<dbReference type="GO" id="GO:0005737">
    <property type="term" value="C:cytoplasm"/>
    <property type="evidence" value="ECO:0007669"/>
    <property type="project" value="UniProtKB-SubCell"/>
</dbReference>
<dbReference type="GO" id="GO:0004019">
    <property type="term" value="F:adenylosuccinate synthase activity"/>
    <property type="evidence" value="ECO:0007669"/>
    <property type="project" value="UniProtKB-UniRule"/>
</dbReference>
<dbReference type="GO" id="GO:0005525">
    <property type="term" value="F:GTP binding"/>
    <property type="evidence" value="ECO:0007669"/>
    <property type="project" value="UniProtKB-UniRule"/>
</dbReference>
<dbReference type="GO" id="GO:0000287">
    <property type="term" value="F:magnesium ion binding"/>
    <property type="evidence" value="ECO:0007669"/>
    <property type="project" value="UniProtKB-UniRule"/>
</dbReference>
<dbReference type="GO" id="GO:0044208">
    <property type="term" value="P:'de novo' AMP biosynthetic process"/>
    <property type="evidence" value="ECO:0007669"/>
    <property type="project" value="UniProtKB-UniRule"/>
</dbReference>
<dbReference type="GO" id="GO:0046040">
    <property type="term" value="P:IMP metabolic process"/>
    <property type="evidence" value="ECO:0007669"/>
    <property type="project" value="TreeGrafter"/>
</dbReference>
<dbReference type="CDD" id="cd03108">
    <property type="entry name" value="AdSS"/>
    <property type="match status" value="1"/>
</dbReference>
<dbReference type="FunFam" id="1.10.300.10:FF:000001">
    <property type="entry name" value="Adenylosuccinate synthetase"/>
    <property type="match status" value="1"/>
</dbReference>
<dbReference type="FunFam" id="3.90.170.10:FF:000001">
    <property type="entry name" value="Adenylosuccinate synthetase"/>
    <property type="match status" value="1"/>
</dbReference>
<dbReference type="Gene3D" id="3.40.440.10">
    <property type="entry name" value="Adenylosuccinate Synthetase, subunit A, domain 1"/>
    <property type="match status" value="1"/>
</dbReference>
<dbReference type="Gene3D" id="1.10.300.10">
    <property type="entry name" value="Adenylosuccinate Synthetase, subunit A, domain 2"/>
    <property type="match status" value="1"/>
</dbReference>
<dbReference type="Gene3D" id="3.90.170.10">
    <property type="entry name" value="Adenylosuccinate Synthetase, subunit A, domain 3"/>
    <property type="match status" value="1"/>
</dbReference>
<dbReference type="HAMAP" id="MF_00011">
    <property type="entry name" value="Adenylosucc_synth"/>
    <property type="match status" value="1"/>
</dbReference>
<dbReference type="InterPro" id="IPR018220">
    <property type="entry name" value="Adenylosuccin_syn_GTP-bd"/>
</dbReference>
<dbReference type="InterPro" id="IPR033128">
    <property type="entry name" value="Adenylosuccin_syn_Lys_AS"/>
</dbReference>
<dbReference type="InterPro" id="IPR042109">
    <property type="entry name" value="Adenylosuccinate_synth_dom1"/>
</dbReference>
<dbReference type="InterPro" id="IPR042110">
    <property type="entry name" value="Adenylosuccinate_synth_dom2"/>
</dbReference>
<dbReference type="InterPro" id="IPR042111">
    <property type="entry name" value="Adenylosuccinate_synth_dom3"/>
</dbReference>
<dbReference type="InterPro" id="IPR001114">
    <property type="entry name" value="Adenylosuccinate_synthetase"/>
</dbReference>
<dbReference type="InterPro" id="IPR027417">
    <property type="entry name" value="P-loop_NTPase"/>
</dbReference>
<dbReference type="NCBIfam" id="NF002223">
    <property type="entry name" value="PRK01117.1"/>
    <property type="match status" value="1"/>
</dbReference>
<dbReference type="NCBIfam" id="TIGR00184">
    <property type="entry name" value="purA"/>
    <property type="match status" value="1"/>
</dbReference>
<dbReference type="PANTHER" id="PTHR11846">
    <property type="entry name" value="ADENYLOSUCCINATE SYNTHETASE"/>
    <property type="match status" value="1"/>
</dbReference>
<dbReference type="PANTHER" id="PTHR11846:SF0">
    <property type="entry name" value="ADENYLOSUCCINATE SYNTHETASE"/>
    <property type="match status" value="1"/>
</dbReference>
<dbReference type="Pfam" id="PF00709">
    <property type="entry name" value="Adenylsucc_synt"/>
    <property type="match status" value="1"/>
</dbReference>
<dbReference type="SMART" id="SM00788">
    <property type="entry name" value="Adenylsucc_synt"/>
    <property type="match status" value="1"/>
</dbReference>
<dbReference type="SUPFAM" id="SSF52540">
    <property type="entry name" value="P-loop containing nucleoside triphosphate hydrolases"/>
    <property type="match status" value="1"/>
</dbReference>
<dbReference type="PROSITE" id="PS01266">
    <property type="entry name" value="ADENYLOSUCCIN_SYN_1"/>
    <property type="match status" value="1"/>
</dbReference>
<dbReference type="PROSITE" id="PS00513">
    <property type="entry name" value="ADENYLOSUCCIN_SYN_2"/>
    <property type="match status" value="1"/>
</dbReference>
<proteinExistence type="inferred from homology"/>
<evidence type="ECO:0000255" key="1">
    <source>
        <dbReference type="HAMAP-Rule" id="MF_00011"/>
    </source>
</evidence>
<organism>
    <name type="scientific">Prochlorococcus marinus (strain MIT 9303)</name>
    <dbReference type="NCBI Taxonomy" id="59922"/>
    <lineage>
        <taxon>Bacteria</taxon>
        <taxon>Bacillati</taxon>
        <taxon>Cyanobacteriota</taxon>
        <taxon>Cyanophyceae</taxon>
        <taxon>Synechococcales</taxon>
        <taxon>Prochlorococcaceae</taxon>
        <taxon>Prochlorococcus</taxon>
    </lineage>
</organism>
<name>PURA_PROM3</name>